<keyword id="KW-0007">Acetylation</keyword>
<keyword id="KW-0963">Cytoplasm</keyword>
<keyword id="KW-1185">Reference proteome</keyword>
<keyword id="KW-0687">Ribonucleoprotein</keyword>
<keyword id="KW-0689">Ribosomal protein</keyword>
<accession>C4XYD5</accession>
<comment type="subunit">
    <text evidence="1">Component of the small ribosomal subunit. Mature ribosomes consist of a small (40S) and a large (60S) subunit. The 40S subunit contains about 33 different proteins and 1 molecule of RNA (18S). The 60S subunit contains about 49 different proteins and 3 molecules of RNA (25S, 5.8S and 5S).</text>
</comment>
<comment type="subcellular location">
    <subcellularLocation>
        <location evidence="1">Cytoplasm</location>
    </subcellularLocation>
</comment>
<comment type="similarity">
    <text evidence="1">Belongs to the eukaryotic ribosomal protein eS1 family.</text>
</comment>
<dbReference type="EMBL" id="CH408076">
    <property type="protein sequence ID" value="EEQ36834.1"/>
    <property type="molecule type" value="Genomic_DNA"/>
</dbReference>
<dbReference type="SMR" id="C4XYD5"/>
<dbReference type="FunCoup" id="C4XYD5">
    <property type="interactions" value="1305"/>
</dbReference>
<dbReference type="STRING" id="306902.C4XYD5"/>
<dbReference type="GeneID" id="8499610"/>
<dbReference type="KEGG" id="clu:CLUG_00957"/>
<dbReference type="VEuPathDB" id="FungiDB:CLUG_00957"/>
<dbReference type="HOGENOM" id="CLU_062507_0_0_1"/>
<dbReference type="InParanoid" id="C4XYD5"/>
<dbReference type="OMA" id="TRFKGHE"/>
<dbReference type="OrthoDB" id="111503at4891"/>
<dbReference type="Proteomes" id="UP000007703">
    <property type="component" value="Unassembled WGS sequence"/>
</dbReference>
<dbReference type="GO" id="GO:0022627">
    <property type="term" value="C:cytosolic small ribosomal subunit"/>
    <property type="evidence" value="ECO:0007669"/>
    <property type="project" value="UniProtKB-UniRule"/>
</dbReference>
<dbReference type="GO" id="GO:0003735">
    <property type="term" value="F:structural constituent of ribosome"/>
    <property type="evidence" value="ECO:0007669"/>
    <property type="project" value="UniProtKB-UniRule"/>
</dbReference>
<dbReference type="GO" id="GO:0006412">
    <property type="term" value="P:translation"/>
    <property type="evidence" value="ECO:0007669"/>
    <property type="project" value="UniProtKB-UniRule"/>
</dbReference>
<dbReference type="HAMAP" id="MF_03122">
    <property type="entry name" value="Ribosomal_eS1_euk"/>
    <property type="match status" value="1"/>
</dbReference>
<dbReference type="InterPro" id="IPR001593">
    <property type="entry name" value="Ribosomal_eS1"/>
</dbReference>
<dbReference type="InterPro" id="IPR018281">
    <property type="entry name" value="Ribosomal_eS1_CS"/>
</dbReference>
<dbReference type="InterPro" id="IPR027500">
    <property type="entry name" value="Ribosomal_eS1_euk"/>
</dbReference>
<dbReference type="PANTHER" id="PTHR11830">
    <property type="entry name" value="40S RIBOSOMAL PROTEIN S3A"/>
    <property type="match status" value="1"/>
</dbReference>
<dbReference type="Pfam" id="PF01015">
    <property type="entry name" value="Ribosomal_S3Ae"/>
    <property type="match status" value="1"/>
</dbReference>
<dbReference type="SMART" id="SM01397">
    <property type="entry name" value="Ribosomal_S3Ae"/>
    <property type="match status" value="1"/>
</dbReference>
<dbReference type="PROSITE" id="PS01191">
    <property type="entry name" value="RIBOSOMAL_S3AE"/>
    <property type="match status" value="1"/>
</dbReference>
<protein>
    <recommendedName>
        <fullName evidence="1">Small ribosomal subunit protein eS1A</fullName>
    </recommendedName>
    <alternativeName>
        <fullName evidence="2">40S ribosomal protein S1-A</fullName>
    </alternativeName>
</protein>
<gene>
    <name evidence="1" type="primary">RPS1A</name>
    <name type="ORF">CLUG_00957</name>
</gene>
<organism>
    <name type="scientific">Clavispora lusitaniae (strain ATCC 42720)</name>
    <name type="common">Yeast</name>
    <name type="synonym">Candida lusitaniae</name>
    <dbReference type="NCBI Taxonomy" id="306902"/>
    <lineage>
        <taxon>Eukaryota</taxon>
        <taxon>Fungi</taxon>
        <taxon>Dikarya</taxon>
        <taxon>Ascomycota</taxon>
        <taxon>Saccharomycotina</taxon>
        <taxon>Pichiomycetes</taxon>
        <taxon>Metschnikowiaceae</taxon>
        <taxon>Clavispora</taxon>
    </lineage>
</organism>
<name>RS3A1_CLAL4</name>
<feature type="initiator methionine" description="Removed" evidence="1">
    <location>
        <position position="1"/>
    </location>
</feature>
<feature type="chain" id="PRO_0000389368" description="Small ribosomal subunit protein eS1A">
    <location>
        <begin position="2"/>
        <end position="256"/>
    </location>
</feature>
<feature type="modified residue" description="N-acetylalanine; partial" evidence="1">
    <location>
        <position position="2"/>
    </location>
</feature>
<evidence type="ECO:0000255" key="1">
    <source>
        <dbReference type="HAMAP-Rule" id="MF_03122"/>
    </source>
</evidence>
<evidence type="ECO:0000305" key="2"/>
<sequence>MAVGKNKRLSKGKKGLKKKAVDPFARKEWFDIKAPSTFENRNVGKTLINKSTGLKNAADGLKGRVFEVCLADLQGSEDHSYRKVKLRVDEVQGKNLLTNFHGLDFTSDKLRSLVRKWQSLVEANVTVKTADDYVLRVFAIAFTKRQANQVKKTTYAQSSKLREVRKKMIEIMQREVSNVTLAQLTSKLIPEVIGREIEKSTQSILPLQNIHIRKVKLLKQPKFDLGSLLALHGEGSTEEKGKKVSSGFKDVVLETV</sequence>
<proteinExistence type="inferred from homology"/>
<reference key="1">
    <citation type="journal article" date="2009" name="Nature">
        <title>Evolution of pathogenicity and sexual reproduction in eight Candida genomes.</title>
        <authorList>
            <person name="Butler G."/>
            <person name="Rasmussen M.D."/>
            <person name="Lin M.F."/>
            <person name="Santos M.A.S."/>
            <person name="Sakthikumar S."/>
            <person name="Munro C.A."/>
            <person name="Rheinbay E."/>
            <person name="Grabherr M."/>
            <person name="Forche A."/>
            <person name="Reedy J.L."/>
            <person name="Agrafioti I."/>
            <person name="Arnaud M.B."/>
            <person name="Bates S."/>
            <person name="Brown A.J.P."/>
            <person name="Brunke S."/>
            <person name="Costanzo M.C."/>
            <person name="Fitzpatrick D.A."/>
            <person name="de Groot P.W.J."/>
            <person name="Harris D."/>
            <person name="Hoyer L.L."/>
            <person name="Hube B."/>
            <person name="Klis F.M."/>
            <person name="Kodira C."/>
            <person name="Lennard N."/>
            <person name="Logue M.E."/>
            <person name="Martin R."/>
            <person name="Neiman A.M."/>
            <person name="Nikolaou E."/>
            <person name="Quail M.A."/>
            <person name="Quinn J."/>
            <person name="Santos M.C."/>
            <person name="Schmitzberger F.F."/>
            <person name="Sherlock G."/>
            <person name="Shah P."/>
            <person name="Silverstein K.A.T."/>
            <person name="Skrzypek M.S."/>
            <person name="Soll D."/>
            <person name="Staggs R."/>
            <person name="Stansfield I."/>
            <person name="Stumpf M.P.H."/>
            <person name="Sudbery P.E."/>
            <person name="Srikantha T."/>
            <person name="Zeng Q."/>
            <person name="Berman J."/>
            <person name="Berriman M."/>
            <person name="Heitman J."/>
            <person name="Gow N.A.R."/>
            <person name="Lorenz M.C."/>
            <person name="Birren B.W."/>
            <person name="Kellis M."/>
            <person name="Cuomo C.A."/>
        </authorList>
    </citation>
    <scope>NUCLEOTIDE SEQUENCE [LARGE SCALE GENOMIC DNA]</scope>
    <source>
        <strain>ATCC 42720</strain>
    </source>
</reference>